<feature type="chain" id="PRO_1000018472" description="Indole-3-glycerol phosphate synthase">
    <location>
        <begin position="1"/>
        <end position="257"/>
    </location>
</feature>
<organism>
    <name type="scientific">Chlorobium chlorochromatii (strain CaD3)</name>
    <dbReference type="NCBI Taxonomy" id="340177"/>
    <lineage>
        <taxon>Bacteria</taxon>
        <taxon>Pseudomonadati</taxon>
        <taxon>Chlorobiota</taxon>
        <taxon>Chlorobiia</taxon>
        <taxon>Chlorobiales</taxon>
        <taxon>Chlorobiaceae</taxon>
        <taxon>Chlorobium/Pelodictyon group</taxon>
        <taxon>Chlorobium</taxon>
    </lineage>
</organism>
<evidence type="ECO:0000255" key="1">
    <source>
        <dbReference type="HAMAP-Rule" id="MF_00134"/>
    </source>
</evidence>
<dbReference type="EC" id="4.1.1.48" evidence="1"/>
<dbReference type="EMBL" id="CP000108">
    <property type="protein sequence ID" value="ABB27452.1"/>
    <property type="molecule type" value="Genomic_DNA"/>
</dbReference>
<dbReference type="SMR" id="Q3AU73"/>
<dbReference type="STRING" id="340177.Cag_0174"/>
<dbReference type="KEGG" id="cch:Cag_0174"/>
<dbReference type="eggNOG" id="COG0134">
    <property type="taxonomic scope" value="Bacteria"/>
</dbReference>
<dbReference type="HOGENOM" id="CLU_034247_2_0_10"/>
<dbReference type="OrthoDB" id="9804217at2"/>
<dbReference type="UniPathway" id="UPA00035">
    <property type="reaction ID" value="UER00043"/>
</dbReference>
<dbReference type="GO" id="GO:0004425">
    <property type="term" value="F:indole-3-glycerol-phosphate synthase activity"/>
    <property type="evidence" value="ECO:0007669"/>
    <property type="project" value="UniProtKB-UniRule"/>
</dbReference>
<dbReference type="GO" id="GO:0004640">
    <property type="term" value="F:phosphoribosylanthranilate isomerase activity"/>
    <property type="evidence" value="ECO:0007669"/>
    <property type="project" value="TreeGrafter"/>
</dbReference>
<dbReference type="GO" id="GO:0000162">
    <property type="term" value="P:L-tryptophan biosynthetic process"/>
    <property type="evidence" value="ECO:0007669"/>
    <property type="project" value="UniProtKB-UniRule"/>
</dbReference>
<dbReference type="CDD" id="cd00331">
    <property type="entry name" value="IGPS"/>
    <property type="match status" value="1"/>
</dbReference>
<dbReference type="FunFam" id="3.20.20.70:FF:000024">
    <property type="entry name" value="Indole-3-glycerol phosphate synthase"/>
    <property type="match status" value="1"/>
</dbReference>
<dbReference type="Gene3D" id="3.20.20.70">
    <property type="entry name" value="Aldolase class I"/>
    <property type="match status" value="1"/>
</dbReference>
<dbReference type="HAMAP" id="MF_00134_B">
    <property type="entry name" value="IGPS_B"/>
    <property type="match status" value="1"/>
</dbReference>
<dbReference type="InterPro" id="IPR013785">
    <property type="entry name" value="Aldolase_TIM"/>
</dbReference>
<dbReference type="InterPro" id="IPR045186">
    <property type="entry name" value="Indole-3-glycerol_P_synth"/>
</dbReference>
<dbReference type="InterPro" id="IPR013798">
    <property type="entry name" value="Indole-3-glycerol_P_synth_dom"/>
</dbReference>
<dbReference type="InterPro" id="IPR001468">
    <property type="entry name" value="Indole-3-GlycerolPSynthase_CS"/>
</dbReference>
<dbReference type="InterPro" id="IPR011060">
    <property type="entry name" value="RibuloseP-bd_barrel"/>
</dbReference>
<dbReference type="NCBIfam" id="NF001377">
    <property type="entry name" value="PRK00278.2-4"/>
    <property type="match status" value="1"/>
</dbReference>
<dbReference type="PANTHER" id="PTHR22854:SF2">
    <property type="entry name" value="INDOLE-3-GLYCEROL-PHOSPHATE SYNTHASE"/>
    <property type="match status" value="1"/>
</dbReference>
<dbReference type="PANTHER" id="PTHR22854">
    <property type="entry name" value="TRYPTOPHAN BIOSYNTHESIS PROTEIN"/>
    <property type="match status" value="1"/>
</dbReference>
<dbReference type="Pfam" id="PF00218">
    <property type="entry name" value="IGPS"/>
    <property type="match status" value="1"/>
</dbReference>
<dbReference type="SUPFAM" id="SSF51366">
    <property type="entry name" value="Ribulose-phoshate binding barrel"/>
    <property type="match status" value="1"/>
</dbReference>
<dbReference type="PROSITE" id="PS00614">
    <property type="entry name" value="IGPS"/>
    <property type="match status" value="1"/>
</dbReference>
<accession>Q3AU73</accession>
<protein>
    <recommendedName>
        <fullName evidence="1">Indole-3-glycerol phosphate synthase</fullName>
        <shortName evidence="1">IGPS</shortName>
        <ecNumber evidence="1">4.1.1.48</ecNumber>
    </recommendedName>
</protein>
<name>TRPC_CHLCH</name>
<comment type="catalytic activity">
    <reaction evidence="1">
        <text>1-(2-carboxyphenylamino)-1-deoxy-D-ribulose 5-phosphate + H(+) = (1S,2R)-1-C-(indol-3-yl)glycerol 3-phosphate + CO2 + H2O</text>
        <dbReference type="Rhea" id="RHEA:23476"/>
        <dbReference type="ChEBI" id="CHEBI:15377"/>
        <dbReference type="ChEBI" id="CHEBI:15378"/>
        <dbReference type="ChEBI" id="CHEBI:16526"/>
        <dbReference type="ChEBI" id="CHEBI:58613"/>
        <dbReference type="ChEBI" id="CHEBI:58866"/>
        <dbReference type="EC" id="4.1.1.48"/>
    </reaction>
</comment>
<comment type="pathway">
    <text evidence="1">Amino-acid biosynthesis; L-tryptophan biosynthesis; L-tryptophan from chorismate: step 4/5.</text>
</comment>
<comment type="similarity">
    <text evidence="1">Belongs to the TrpC family.</text>
</comment>
<proteinExistence type="inferred from homology"/>
<sequence>MTYLDRILEHKQIEVAALKKEQPRQRYEELQAELEAPRNFSASLKRPANKGVRLIAEIKKASPSRGLIVQDFDPLAMAQRYQELGAAAFSVLTDQQFFQGSNDYLRQVKGAFKLPVLRKDFIVDALQIFEARLLGADAILLIVAALESSQLRDYLQLSAELGLSALVEVHDGAELDEALQQGATILGVNNRNLKDFSVDINTSIKLRPSIPSDMIAVAESGLKRAADIDAVNAAGFDAVLIGEGLHISTELRSLIWT</sequence>
<reference key="1">
    <citation type="submission" date="2005-08" db="EMBL/GenBank/DDBJ databases">
        <title>Complete sequence of Chlorobium chlorochromatii CaD3.</title>
        <authorList>
            <consortium name="US DOE Joint Genome Institute"/>
            <person name="Copeland A."/>
            <person name="Lucas S."/>
            <person name="Lapidus A."/>
            <person name="Barry K."/>
            <person name="Detter J.C."/>
            <person name="Glavina T."/>
            <person name="Hammon N."/>
            <person name="Israni S."/>
            <person name="Pitluck S."/>
            <person name="Bryant D."/>
            <person name="Schmutz J."/>
            <person name="Larimer F."/>
            <person name="Land M."/>
            <person name="Kyrpides N."/>
            <person name="Ivanova N."/>
            <person name="Richardson P."/>
        </authorList>
    </citation>
    <scope>NUCLEOTIDE SEQUENCE [LARGE SCALE GENOMIC DNA]</scope>
    <source>
        <strain>CaD3</strain>
    </source>
</reference>
<keyword id="KW-0028">Amino-acid biosynthesis</keyword>
<keyword id="KW-0057">Aromatic amino acid biosynthesis</keyword>
<keyword id="KW-0210">Decarboxylase</keyword>
<keyword id="KW-0456">Lyase</keyword>
<keyword id="KW-0822">Tryptophan biosynthesis</keyword>
<gene>
    <name evidence="1" type="primary">trpC</name>
    <name type="ordered locus">Cag_0174</name>
</gene>